<proteinExistence type="inferred from homology"/>
<protein>
    <recommendedName>
        <fullName evidence="1">UDP-N-acetyl-D-mannosaminuronic acid transferase</fullName>
        <shortName evidence="1">UDP-ManNAcA transferase</shortName>
        <ecNumber evidence="1">2.4.1.180</ecNumber>
    </recommendedName>
</protein>
<comment type="function">
    <text evidence="1">Catalyzes the synthesis of Und-PP-GlcNAc-ManNAcA (Lipid II), the second lipid-linked intermediate involved in enterobacterial common antigen (ECA) synthesis.</text>
</comment>
<comment type="catalytic activity">
    <reaction evidence="1">
        <text>UDP-N-acetyl-alpha-D-mannosaminouronate + N-acetyl-alpha-D-glucosaminyl-di-trans,octa-cis-undecaprenyl diphosphate = beta-D-ManNAcA-(1-&gt;4)-alpha-D-GlcNAc-di-trans,octa-cis-undecaprenyl diphosphate + UDP + H(+)</text>
        <dbReference type="Rhea" id="RHEA:28366"/>
        <dbReference type="ChEBI" id="CHEBI:15378"/>
        <dbReference type="ChEBI" id="CHEBI:58223"/>
        <dbReference type="ChEBI" id="CHEBI:61495"/>
        <dbReference type="ChEBI" id="CHEBI:62959"/>
        <dbReference type="ChEBI" id="CHEBI:70731"/>
        <dbReference type="EC" id="2.4.1.180"/>
    </reaction>
</comment>
<comment type="pathway">
    <text evidence="1">Bacterial outer membrane biogenesis; enterobacterial common antigen biosynthesis.</text>
</comment>
<comment type="similarity">
    <text evidence="1">Belongs to the glycosyltransferase 26 family.</text>
</comment>
<keyword id="KW-0328">Glycosyltransferase</keyword>
<keyword id="KW-0808">Transferase</keyword>
<evidence type="ECO:0000255" key="1">
    <source>
        <dbReference type="HAMAP-Rule" id="MF_01001"/>
    </source>
</evidence>
<reference key="1">
    <citation type="journal article" date="2009" name="PLoS Genet.">
        <title>Organised genome dynamics in the Escherichia coli species results in highly diverse adaptive paths.</title>
        <authorList>
            <person name="Touchon M."/>
            <person name="Hoede C."/>
            <person name="Tenaillon O."/>
            <person name="Barbe V."/>
            <person name="Baeriswyl S."/>
            <person name="Bidet P."/>
            <person name="Bingen E."/>
            <person name="Bonacorsi S."/>
            <person name="Bouchier C."/>
            <person name="Bouvet O."/>
            <person name="Calteau A."/>
            <person name="Chiapello H."/>
            <person name="Clermont O."/>
            <person name="Cruveiller S."/>
            <person name="Danchin A."/>
            <person name="Diard M."/>
            <person name="Dossat C."/>
            <person name="Karoui M.E."/>
            <person name="Frapy E."/>
            <person name="Garry L."/>
            <person name="Ghigo J.M."/>
            <person name="Gilles A.M."/>
            <person name="Johnson J."/>
            <person name="Le Bouguenec C."/>
            <person name="Lescat M."/>
            <person name="Mangenot S."/>
            <person name="Martinez-Jehanne V."/>
            <person name="Matic I."/>
            <person name="Nassif X."/>
            <person name="Oztas S."/>
            <person name="Petit M.A."/>
            <person name="Pichon C."/>
            <person name="Rouy Z."/>
            <person name="Ruf C.S."/>
            <person name="Schneider D."/>
            <person name="Tourret J."/>
            <person name="Vacherie B."/>
            <person name="Vallenet D."/>
            <person name="Medigue C."/>
            <person name="Rocha E.P.C."/>
            <person name="Denamur E."/>
        </authorList>
    </citation>
    <scope>NUCLEOTIDE SEQUENCE [LARGE SCALE GENOMIC DNA]</scope>
    <source>
        <strain>IAI1</strain>
    </source>
</reference>
<accession>B7M5E2</accession>
<dbReference type="EC" id="2.4.1.180" evidence="1"/>
<dbReference type="EMBL" id="CU928160">
    <property type="protein sequence ID" value="CAR00767.1"/>
    <property type="molecule type" value="Genomic_DNA"/>
</dbReference>
<dbReference type="RefSeq" id="WP_001064010.1">
    <property type="nucleotide sequence ID" value="NC_011741.1"/>
</dbReference>
<dbReference type="SMR" id="B7M5E2"/>
<dbReference type="CAZy" id="GT26">
    <property type="family name" value="Glycosyltransferase Family 26"/>
</dbReference>
<dbReference type="GeneID" id="75204785"/>
<dbReference type="KEGG" id="ecr:ECIAI1_3982"/>
<dbReference type="HOGENOM" id="CLU_063203_3_2_6"/>
<dbReference type="UniPathway" id="UPA00566"/>
<dbReference type="GO" id="GO:0047241">
    <property type="term" value="F:lipopolysaccharide N-acetylmannosaminouronosyltransferase activity"/>
    <property type="evidence" value="ECO:0007669"/>
    <property type="project" value="UniProtKB-UniRule"/>
</dbReference>
<dbReference type="GO" id="GO:0009246">
    <property type="term" value="P:enterobacterial common antigen biosynthetic process"/>
    <property type="evidence" value="ECO:0007669"/>
    <property type="project" value="UniProtKB-UniRule"/>
</dbReference>
<dbReference type="CDD" id="cd06533">
    <property type="entry name" value="Glyco_transf_WecG_TagA"/>
    <property type="match status" value="1"/>
</dbReference>
<dbReference type="HAMAP" id="MF_01001">
    <property type="entry name" value="WecG_RffM"/>
    <property type="match status" value="1"/>
</dbReference>
<dbReference type="InterPro" id="IPR023085">
    <property type="entry name" value="UDP-ManNAcA_Trfase_WecG"/>
</dbReference>
<dbReference type="InterPro" id="IPR004629">
    <property type="entry name" value="WecG_TagA_CpsF"/>
</dbReference>
<dbReference type="NCBIfam" id="NF002980">
    <property type="entry name" value="PRK03692.1"/>
    <property type="match status" value="1"/>
</dbReference>
<dbReference type="NCBIfam" id="TIGR00696">
    <property type="entry name" value="wecG_tagA_cpsF"/>
    <property type="match status" value="1"/>
</dbReference>
<dbReference type="PANTHER" id="PTHR34136">
    <property type="match status" value="1"/>
</dbReference>
<dbReference type="PANTHER" id="PTHR34136:SF1">
    <property type="entry name" value="UDP-N-ACETYL-D-MANNOSAMINURONIC ACID TRANSFERASE"/>
    <property type="match status" value="1"/>
</dbReference>
<dbReference type="Pfam" id="PF03808">
    <property type="entry name" value="Glyco_tran_WecG"/>
    <property type="match status" value="1"/>
</dbReference>
<name>WECG_ECO8A</name>
<gene>
    <name evidence="1" type="primary">wecG</name>
    <name evidence="1" type="synonym">rffM</name>
    <name type="ordered locus">ECIAI1_3982</name>
</gene>
<organism>
    <name type="scientific">Escherichia coli O8 (strain IAI1)</name>
    <dbReference type="NCBI Taxonomy" id="585034"/>
    <lineage>
        <taxon>Bacteria</taxon>
        <taxon>Pseudomonadati</taxon>
        <taxon>Pseudomonadota</taxon>
        <taxon>Gammaproteobacteria</taxon>
        <taxon>Enterobacterales</taxon>
        <taxon>Enterobacteriaceae</taxon>
        <taxon>Escherichia</taxon>
    </lineage>
</organism>
<sequence>MNNNTMAPTYTLRGLQLIGWRDMQHALDYLFADGHLKQGTLVAINAEKMLTIEDNAEVRELINAAEFKYADGISVVRSVRKKYPQAQVSRVAGADLWEELMARAGKEGTPVFLVGGKPEVLAQTEAKLRNQWNVNIVGSQDGYFKPEQRQALFERIHASGAQIVTVAMGSPKQEIFMRDCRLVHPDALYMGVGGTYDVFTGHVKRAPKIWQTLGLEWLYRLLSQPSRIKRQLRLLRYLRWHYTGNL</sequence>
<feature type="chain" id="PRO_1000134574" description="UDP-N-acetyl-D-mannosaminuronic acid transferase">
    <location>
        <begin position="1"/>
        <end position="246"/>
    </location>
</feature>